<organism>
    <name type="scientific">Carassius auratus</name>
    <name type="common">Goldfish</name>
    <dbReference type="NCBI Taxonomy" id="7957"/>
    <lineage>
        <taxon>Eukaryota</taxon>
        <taxon>Metazoa</taxon>
        <taxon>Chordata</taxon>
        <taxon>Craniata</taxon>
        <taxon>Vertebrata</taxon>
        <taxon>Euteleostomi</taxon>
        <taxon>Actinopterygii</taxon>
        <taxon>Neopterygii</taxon>
        <taxon>Teleostei</taxon>
        <taxon>Ostariophysi</taxon>
        <taxon>Cypriniformes</taxon>
        <taxon>Cyprinidae</taxon>
        <taxon>Cyprininae</taxon>
        <taxon>Carassius</taxon>
    </lineage>
</organism>
<comment type="subunit">
    <text>Heterotetramer of two type I and two type II keratins.</text>
</comment>
<comment type="tissue specificity">
    <text>Optic nerve.</text>
</comment>
<comment type="miscellaneous">
    <text>There are two types of cytoskeletal and microfibrillar keratin: I (acidic; 40-55 kDa) and II (neutral to basic; 56-70 kDa).</text>
</comment>
<comment type="similarity">
    <text evidence="1">Belongs to the intermediate filament family.</text>
</comment>
<reference key="1">
    <citation type="journal article" date="1992" name="Differentiation">
        <title>Cloning of a type I keratin from goldfish optic nerve: differential expression of keratins during regeneration.</title>
        <authorList>
            <person name="Druger R.K."/>
            <person name="Levine E.M."/>
            <person name="Glasgow E."/>
            <person name="Jones P.S."/>
            <person name="Schechter N."/>
        </authorList>
    </citation>
    <scope>NUCLEOTIDE SEQUENCE [MRNA]</scope>
</reference>
<dbReference type="EMBL" id="M86918">
    <property type="protein sequence ID" value="AAA49184.1"/>
    <property type="molecule type" value="mRNA"/>
</dbReference>
<dbReference type="PIR" id="I50476">
    <property type="entry name" value="I50476"/>
</dbReference>
<dbReference type="RefSeq" id="XP_026130762.1">
    <property type="nucleotide sequence ID" value="XM_026274977.1"/>
</dbReference>
<dbReference type="SMR" id="Q90303"/>
<dbReference type="GeneID" id="113110795"/>
<dbReference type="OrthoDB" id="2441647at2759"/>
<dbReference type="Proteomes" id="UP000515129">
    <property type="component" value="Chromosome 11"/>
</dbReference>
<dbReference type="GO" id="GO:0005882">
    <property type="term" value="C:intermediate filament"/>
    <property type="evidence" value="ECO:0007669"/>
    <property type="project" value="UniProtKB-KW"/>
</dbReference>
<dbReference type="GO" id="GO:0005198">
    <property type="term" value="F:structural molecule activity"/>
    <property type="evidence" value="ECO:0007669"/>
    <property type="project" value="InterPro"/>
</dbReference>
<dbReference type="FunFam" id="1.20.5.1160:FF:000002">
    <property type="entry name" value="Type I keratin 10"/>
    <property type="match status" value="1"/>
</dbReference>
<dbReference type="FunFam" id="1.20.5.170:FF:000002">
    <property type="entry name" value="Type I keratin KA11"/>
    <property type="match status" value="1"/>
</dbReference>
<dbReference type="FunFam" id="1.20.5.500:FF:000001">
    <property type="entry name" value="Type II keratin 23"/>
    <property type="match status" value="1"/>
</dbReference>
<dbReference type="Gene3D" id="1.20.5.170">
    <property type="match status" value="1"/>
</dbReference>
<dbReference type="Gene3D" id="1.20.5.500">
    <property type="entry name" value="Single helix bin"/>
    <property type="match status" value="1"/>
</dbReference>
<dbReference type="Gene3D" id="1.20.5.1160">
    <property type="entry name" value="Vasodilator-stimulated phosphoprotein"/>
    <property type="match status" value="1"/>
</dbReference>
<dbReference type="InterPro" id="IPR039008">
    <property type="entry name" value="IF_rod_dom"/>
</dbReference>
<dbReference type="InterPro" id="IPR002957">
    <property type="entry name" value="Keratin_I"/>
</dbReference>
<dbReference type="PANTHER" id="PTHR23239">
    <property type="entry name" value="INTERMEDIATE FILAMENT"/>
    <property type="match status" value="1"/>
</dbReference>
<dbReference type="PANTHER" id="PTHR23239:SF367">
    <property type="entry name" value="KERATIN 15-RELATED"/>
    <property type="match status" value="1"/>
</dbReference>
<dbReference type="Pfam" id="PF00038">
    <property type="entry name" value="Filament"/>
    <property type="match status" value="1"/>
</dbReference>
<dbReference type="PRINTS" id="PR01248">
    <property type="entry name" value="TYPE1KERATIN"/>
</dbReference>
<dbReference type="SMART" id="SM01391">
    <property type="entry name" value="Filament"/>
    <property type="match status" value="1"/>
</dbReference>
<dbReference type="SUPFAM" id="SSF64593">
    <property type="entry name" value="Intermediate filament protein, coiled coil region"/>
    <property type="match status" value="2"/>
</dbReference>
<dbReference type="PROSITE" id="PS51842">
    <property type="entry name" value="IF_ROD_2"/>
    <property type="match status" value="1"/>
</dbReference>
<name>K1C1_CARAU</name>
<keyword id="KW-0175">Coiled coil</keyword>
<keyword id="KW-0403">Intermediate filament</keyword>
<keyword id="KW-0416">Keratin</keyword>
<keyword id="KW-1185">Reference proteome</keyword>
<sequence length="467" mass="49760">MTSFSRQSFMSSGGGIGGSSMRGPSMGSMSRSSGIGGGGGGHISAMRAGSVYGGAGGHGVRISTGTRTFASGGGGGGGASYGFGGGSGGGGGFGYGSGAGGGFGGGDMDAKVNVSEKATMQNLNDRLATYLEKVHSLEKANGDLELKIRQFLENKTSPDARDYSAYHATISDLQDMIQDATRINGGVYLAIDNAKLATDDFKTKYENELAMRQSVEADIAGLKRLLDELTLARSDLEMQIEGLKEELIYLKKNHEEELASMRSQMTGTVNVEVDAAPQEDLSRVMAEIREQYEGVSAKNQRELDAWFQTKSETLTKEVTANTETLQVSKTEVTELRRTLQGLEIELQSELSKKRSLEGTLADTESRYSIQLTQLQARVTSLEEQIVHLRGDMDRQSQEYQMLLDIKTRLEMEIAEYRRLLDGGATSFSTSGGGGGGGGGVVSSTKTITVKTIEEDIVDGKVVSSTTK</sequence>
<proteinExistence type="evidence at transcript level"/>
<protein>
    <recommendedName>
        <fullName>Keratin, type I cytoskeletal 50 kDa</fullName>
    </recommendedName>
    <alternativeName>
        <fullName>GK50</fullName>
    </alternativeName>
</protein>
<evidence type="ECO:0000255" key="1">
    <source>
        <dbReference type="PROSITE-ProRule" id="PRU01188"/>
    </source>
</evidence>
<evidence type="ECO:0000256" key="2">
    <source>
        <dbReference type="SAM" id="MobiDB-lite"/>
    </source>
</evidence>
<feature type="chain" id="PRO_0000063708" description="Keratin, type I cytoskeletal 50 kDa">
    <location>
        <begin position="1"/>
        <end position="467"/>
    </location>
</feature>
<feature type="domain" description="IF rod" evidence="1">
    <location>
        <begin position="116"/>
        <end position="427"/>
    </location>
</feature>
<feature type="region of interest" description="Head">
    <location>
        <begin position="1"/>
        <end position="115"/>
    </location>
</feature>
<feature type="region of interest" description="Disordered" evidence="2">
    <location>
        <begin position="1"/>
        <end position="40"/>
    </location>
</feature>
<feature type="region of interest" description="Coil 1A">
    <location>
        <begin position="116"/>
        <end position="151"/>
    </location>
</feature>
<feature type="region of interest" description="Linker 1">
    <location>
        <begin position="152"/>
        <end position="169"/>
    </location>
</feature>
<feature type="region of interest" description="Coil 1B">
    <location>
        <begin position="170"/>
        <end position="261"/>
    </location>
</feature>
<feature type="region of interest" description="Linker 12">
    <location>
        <begin position="262"/>
        <end position="284"/>
    </location>
</feature>
<feature type="region of interest" description="Coil 2">
    <location>
        <begin position="285"/>
        <end position="423"/>
    </location>
</feature>
<feature type="region of interest" description="Tail">
    <location>
        <begin position="424"/>
        <end position="467"/>
    </location>
</feature>
<feature type="compositionally biased region" description="Low complexity" evidence="2">
    <location>
        <begin position="21"/>
        <end position="33"/>
    </location>
</feature>
<feature type="site" description="Stutter">
    <location>
        <position position="365"/>
    </location>
</feature>
<accession>Q90303</accession>